<name>HLDE_PSEF5</name>
<accession>Q4KJA9</accession>
<evidence type="ECO:0000255" key="1">
    <source>
        <dbReference type="HAMAP-Rule" id="MF_01603"/>
    </source>
</evidence>
<comment type="function">
    <text evidence="1">Catalyzes the phosphorylation of D-glycero-D-manno-heptose 7-phosphate at the C-1 position to selectively form D-glycero-beta-D-manno-heptose-1,7-bisphosphate.</text>
</comment>
<comment type="function">
    <text evidence="1">Catalyzes the ADP transfer from ATP to D-glycero-beta-D-manno-heptose 1-phosphate, yielding ADP-D-glycero-beta-D-manno-heptose.</text>
</comment>
<comment type="catalytic activity">
    <reaction evidence="1">
        <text>D-glycero-beta-D-manno-heptose 7-phosphate + ATP = D-glycero-beta-D-manno-heptose 1,7-bisphosphate + ADP + H(+)</text>
        <dbReference type="Rhea" id="RHEA:27473"/>
        <dbReference type="ChEBI" id="CHEBI:15378"/>
        <dbReference type="ChEBI" id="CHEBI:30616"/>
        <dbReference type="ChEBI" id="CHEBI:60204"/>
        <dbReference type="ChEBI" id="CHEBI:60208"/>
        <dbReference type="ChEBI" id="CHEBI:456216"/>
        <dbReference type="EC" id="2.7.1.167"/>
    </reaction>
</comment>
<comment type="catalytic activity">
    <reaction evidence="1">
        <text>D-glycero-beta-D-manno-heptose 1-phosphate + ATP + H(+) = ADP-D-glycero-beta-D-manno-heptose + diphosphate</text>
        <dbReference type="Rhea" id="RHEA:27465"/>
        <dbReference type="ChEBI" id="CHEBI:15378"/>
        <dbReference type="ChEBI" id="CHEBI:30616"/>
        <dbReference type="ChEBI" id="CHEBI:33019"/>
        <dbReference type="ChEBI" id="CHEBI:59967"/>
        <dbReference type="ChEBI" id="CHEBI:61593"/>
        <dbReference type="EC" id="2.7.7.70"/>
    </reaction>
</comment>
<comment type="pathway">
    <text evidence="1">Nucleotide-sugar biosynthesis; ADP-L-glycero-beta-D-manno-heptose biosynthesis; ADP-L-glycero-beta-D-manno-heptose from D-glycero-beta-D-manno-heptose 7-phosphate: step 1/4.</text>
</comment>
<comment type="pathway">
    <text evidence="1">Nucleotide-sugar biosynthesis; ADP-L-glycero-beta-D-manno-heptose biosynthesis; ADP-L-glycero-beta-D-manno-heptose from D-glycero-beta-D-manno-heptose 7-phosphate: step 3/4.</text>
</comment>
<comment type="subunit">
    <text evidence="1">Homodimer.</text>
</comment>
<comment type="similarity">
    <text evidence="1">In the N-terminal section; belongs to the carbohydrate kinase PfkB family.</text>
</comment>
<comment type="similarity">
    <text evidence="1">In the C-terminal section; belongs to the cytidylyltransferase family.</text>
</comment>
<reference key="1">
    <citation type="journal article" date="2005" name="Nat. Biotechnol.">
        <title>Complete genome sequence of the plant commensal Pseudomonas fluorescens Pf-5.</title>
        <authorList>
            <person name="Paulsen I.T."/>
            <person name="Press C.M."/>
            <person name="Ravel J."/>
            <person name="Kobayashi D.Y."/>
            <person name="Myers G.S.A."/>
            <person name="Mavrodi D.V."/>
            <person name="DeBoy R.T."/>
            <person name="Seshadri R."/>
            <person name="Ren Q."/>
            <person name="Madupu R."/>
            <person name="Dodson R.J."/>
            <person name="Durkin A.S."/>
            <person name="Brinkac L.M."/>
            <person name="Daugherty S.C."/>
            <person name="Sullivan S.A."/>
            <person name="Rosovitz M.J."/>
            <person name="Gwinn M.L."/>
            <person name="Zhou L."/>
            <person name="Schneider D.J."/>
            <person name="Cartinhour S.W."/>
            <person name="Nelson W.C."/>
            <person name="Weidman J."/>
            <person name="Watkins K."/>
            <person name="Tran K."/>
            <person name="Khouri H."/>
            <person name="Pierson E.A."/>
            <person name="Pierson L.S. III"/>
            <person name="Thomashow L.S."/>
            <person name="Loper J.E."/>
        </authorList>
    </citation>
    <scope>NUCLEOTIDE SEQUENCE [LARGE SCALE GENOMIC DNA]</scope>
    <source>
        <strain>ATCC BAA-477 / NRRL B-23932 / Pf-5</strain>
    </source>
</reference>
<sequence length="477" mass="50437">MKLSMPRFDQAPVLVVGDVMLDRYWHGGTSRISPEAPVPVVKVEQIEDRPGGAANVALNIAALGAPASLVGVTGDDEAADSLANSLQGAGVRALFQRIKHQPTIVKLRVMSRHQQLLRIDFEEPFATDALALAAEVDALLDGIKVLVLSDYGKGALRNHQVLIAAARARGIPVLADPKGKDFSIYRGASLITPNLSEFETIVGGCADEHELVSKGAQLMHDLELGALLVTRGEHGMTLLRPDHPAMHLPARAREVFDVTGAGDTVISTLAAAIAAGEELPHAVGLANLAAGIVVGKLGTAAISAPELRRAIQREEGSERGVLSLDQLLLAIDDARAHNEKIVFTNGCFDILHAGHVTYLEQARAQGDRLIVAINDDASVSRLKGPGRPINSVDRRMAVLAGLGAVDWVISFPEGTPENLLSQVRPDVLVKGGDYSIDQVVGADIVGAYGGTVKVLGLVENSSTTAIVEKIRKTDKAE</sequence>
<dbReference type="EC" id="2.7.1.167" evidence="1"/>
<dbReference type="EC" id="2.7.7.70" evidence="1"/>
<dbReference type="EMBL" id="CP000076">
    <property type="protein sequence ID" value="AAY95939.1"/>
    <property type="molecule type" value="Genomic_DNA"/>
</dbReference>
<dbReference type="RefSeq" id="WP_011058903.1">
    <property type="nucleotide sequence ID" value="NC_004129.6"/>
</dbReference>
<dbReference type="SMR" id="Q4KJA9"/>
<dbReference type="STRING" id="220664.PFL_0530"/>
<dbReference type="GeneID" id="57473520"/>
<dbReference type="KEGG" id="pfl:PFL_0530"/>
<dbReference type="PATRIC" id="fig|220664.5.peg.547"/>
<dbReference type="eggNOG" id="COG0615">
    <property type="taxonomic scope" value="Bacteria"/>
</dbReference>
<dbReference type="eggNOG" id="COG2870">
    <property type="taxonomic scope" value="Bacteria"/>
</dbReference>
<dbReference type="HOGENOM" id="CLU_021150_2_1_6"/>
<dbReference type="UniPathway" id="UPA00356">
    <property type="reaction ID" value="UER00437"/>
</dbReference>
<dbReference type="UniPathway" id="UPA00356">
    <property type="reaction ID" value="UER00439"/>
</dbReference>
<dbReference type="Proteomes" id="UP000008540">
    <property type="component" value="Chromosome"/>
</dbReference>
<dbReference type="GO" id="GO:0005829">
    <property type="term" value="C:cytosol"/>
    <property type="evidence" value="ECO:0007669"/>
    <property type="project" value="TreeGrafter"/>
</dbReference>
<dbReference type="GO" id="GO:0005524">
    <property type="term" value="F:ATP binding"/>
    <property type="evidence" value="ECO:0007669"/>
    <property type="project" value="UniProtKB-UniRule"/>
</dbReference>
<dbReference type="GO" id="GO:0033785">
    <property type="term" value="F:heptose 7-phosphate kinase activity"/>
    <property type="evidence" value="ECO:0007669"/>
    <property type="project" value="UniProtKB-UniRule"/>
</dbReference>
<dbReference type="GO" id="GO:0033786">
    <property type="term" value="F:heptose-1-phosphate adenylyltransferase activity"/>
    <property type="evidence" value="ECO:0007669"/>
    <property type="project" value="UniProtKB-UniRule"/>
</dbReference>
<dbReference type="GO" id="GO:0016773">
    <property type="term" value="F:phosphotransferase activity, alcohol group as acceptor"/>
    <property type="evidence" value="ECO:0007669"/>
    <property type="project" value="InterPro"/>
</dbReference>
<dbReference type="GO" id="GO:0097171">
    <property type="term" value="P:ADP-L-glycero-beta-D-manno-heptose biosynthetic process"/>
    <property type="evidence" value="ECO:0007669"/>
    <property type="project" value="UniProtKB-UniPathway"/>
</dbReference>
<dbReference type="CDD" id="cd01172">
    <property type="entry name" value="RfaE_like"/>
    <property type="match status" value="1"/>
</dbReference>
<dbReference type="FunFam" id="3.40.1190.20:FF:000002">
    <property type="entry name" value="Bifunctional protein HldE"/>
    <property type="match status" value="1"/>
</dbReference>
<dbReference type="FunFam" id="3.40.50.620:FF:000028">
    <property type="entry name" value="Bifunctional protein HldE"/>
    <property type="match status" value="1"/>
</dbReference>
<dbReference type="Gene3D" id="3.40.1190.20">
    <property type="match status" value="1"/>
</dbReference>
<dbReference type="Gene3D" id="3.40.50.620">
    <property type="entry name" value="HUPs"/>
    <property type="match status" value="1"/>
</dbReference>
<dbReference type="HAMAP" id="MF_01603">
    <property type="entry name" value="HldE"/>
    <property type="match status" value="1"/>
</dbReference>
<dbReference type="InterPro" id="IPR023030">
    <property type="entry name" value="Bifunc_HldE"/>
</dbReference>
<dbReference type="InterPro" id="IPR002173">
    <property type="entry name" value="Carboh/pur_kinase_PfkB_CS"/>
</dbReference>
<dbReference type="InterPro" id="IPR004821">
    <property type="entry name" value="Cyt_trans-like"/>
</dbReference>
<dbReference type="InterPro" id="IPR011611">
    <property type="entry name" value="PfkB_dom"/>
</dbReference>
<dbReference type="InterPro" id="IPR011913">
    <property type="entry name" value="RfaE_dom_I"/>
</dbReference>
<dbReference type="InterPro" id="IPR011914">
    <property type="entry name" value="RfaE_dom_II"/>
</dbReference>
<dbReference type="InterPro" id="IPR029056">
    <property type="entry name" value="Ribokinase-like"/>
</dbReference>
<dbReference type="InterPro" id="IPR014729">
    <property type="entry name" value="Rossmann-like_a/b/a_fold"/>
</dbReference>
<dbReference type="NCBIfam" id="TIGR00125">
    <property type="entry name" value="cyt_tran_rel"/>
    <property type="match status" value="1"/>
</dbReference>
<dbReference type="NCBIfam" id="NF008454">
    <property type="entry name" value="PRK11316.1"/>
    <property type="match status" value="1"/>
</dbReference>
<dbReference type="NCBIfam" id="TIGR02198">
    <property type="entry name" value="rfaE_dom_I"/>
    <property type="match status" value="1"/>
</dbReference>
<dbReference type="NCBIfam" id="TIGR02199">
    <property type="entry name" value="rfaE_dom_II"/>
    <property type="match status" value="1"/>
</dbReference>
<dbReference type="PANTHER" id="PTHR46969">
    <property type="entry name" value="BIFUNCTIONAL PROTEIN HLDE"/>
    <property type="match status" value="1"/>
</dbReference>
<dbReference type="PANTHER" id="PTHR46969:SF1">
    <property type="entry name" value="BIFUNCTIONAL PROTEIN HLDE"/>
    <property type="match status" value="1"/>
</dbReference>
<dbReference type="Pfam" id="PF01467">
    <property type="entry name" value="CTP_transf_like"/>
    <property type="match status" value="1"/>
</dbReference>
<dbReference type="Pfam" id="PF00294">
    <property type="entry name" value="PfkB"/>
    <property type="match status" value="1"/>
</dbReference>
<dbReference type="SUPFAM" id="SSF52374">
    <property type="entry name" value="Nucleotidylyl transferase"/>
    <property type="match status" value="1"/>
</dbReference>
<dbReference type="SUPFAM" id="SSF53613">
    <property type="entry name" value="Ribokinase-like"/>
    <property type="match status" value="1"/>
</dbReference>
<dbReference type="PROSITE" id="PS00583">
    <property type="entry name" value="PFKB_KINASES_1"/>
    <property type="match status" value="1"/>
</dbReference>
<feature type="chain" id="PRO_0000255773" description="Bifunctional protein HldE">
    <location>
        <begin position="1"/>
        <end position="477"/>
    </location>
</feature>
<feature type="region of interest" description="Ribokinase">
    <location>
        <begin position="1"/>
        <end position="318"/>
    </location>
</feature>
<feature type="region of interest" description="Cytidylyltransferase">
    <location>
        <begin position="343"/>
        <end position="477"/>
    </location>
</feature>
<feature type="active site" evidence="1">
    <location>
        <position position="263"/>
    </location>
</feature>
<feature type="binding site" evidence="1">
    <location>
        <begin position="194"/>
        <end position="197"/>
    </location>
    <ligand>
        <name>ATP</name>
        <dbReference type="ChEBI" id="CHEBI:30616"/>
    </ligand>
</feature>
<organism>
    <name type="scientific">Pseudomonas fluorescens (strain ATCC BAA-477 / NRRL B-23932 / Pf-5)</name>
    <dbReference type="NCBI Taxonomy" id="220664"/>
    <lineage>
        <taxon>Bacteria</taxon>
        <taxon>Pseudomonadati</taxon>
        <taxon>Pseudomonadota</taxon>
        <taxon>Gammaproteobacteria</taxon>
        <taxon>Pseudomonadales</taxon>
        <taxon>Pseudomonadaceae</taxon>
        <taxon>Pseudomonas</taxon>
    </lineage>
</organism>
<proteinExistence type="inferred from homology"/>
<protein>
    <recommendedName>
        <fullName evidence="1">Bifunctional protein HldE</fullName>
    </recommendedName>
    <domain>
        <recommendedName>
            <fullName evidence="1">D-beta-D-heptose 7-phosphate kinase</fullName>
            <ecNumber evidence="1">2.7.1.167</ecNumber>
        </recommendedName>
        <alternativeName>
            <fullName evidence="1">D-beta-D-heptose 7-phosphotransferase</fullName>
        </alternativeName>
        <alternativeName>
            <fullName evidence="1">D-glycero-beta-D-manno-heptose-7-phosphate kinase</fullName>
        </alternativeName>
    </domain>
    <domain>
        <recommendedName>
            <fullName evidence="1">D-beta-D-heptose 1-phosphate adenylyltransferase</fullName>
            <ecNumber evidence="1">2.7.7.70</ecNumber>
        </recommendedName>
        <alternativeName>
            <fullName evidence="1">D-glycero-beta-D-manno-heptose 1-phosphate adenylyltransferase</fullName>
        </alternativeName>
    </domain>
</protein>
<keyword id="KW-0067">ATP-binding</keyword>
<keyword id="KW-0119">Carbohydrate metabolism</keyword>
<keyword id="KW-0418">Kinase</keyword>
<keyword id="KW-0511">Multifunctional enzyme</keyword>
<keyword id="KW-0547">Nucleotide-binding</keyword>
<keyword id="KW-0548">Nucleotidyltransferase</keyword>
<keyword id="KW-0808">Transferase</keyword>
<gene>
    <name evidence="1" type="primary">hldE</name>
    <name type="ordered locus">PFL_0530</name>
</gene>